<keyword id="KW-0238">DNA-binding</keyword>
<keyword id="KW-0539">Nucleus</keyword>
<keyword id="KW-1185">Reference proteome</keyword>
<keyword id="KW-0804">Transcription</keyword>
<keyword id="KW-0805">Transcription regulation</keyword>
<comment type="function">
    <text evidence="1">Transcription factor. Interacts specifically with the W box (5'-(T)TGAC[CT]-3'), a frequently occurring elicitor-responsive cis-acting element (By similarity).</text>
</comment>
<comment type="interaction">
    <interactant intactId="EBI-1993243">
        <id>Q9LZV6</id>
    </interactant>
    <interactant intactId="EBI-593040">
        <id>O22446</id>
        <label>HDA19</label>
    </interactant>
    <organismsDiffer>false</organismsDiffer>
    <experiments>5</experiments>
</comment>
<comment type="subcellular location">
    <subcellularLocation>
        <location evidence="5">Nucleus</location>
    </subcellularLocation>
</comment>
<comment type="induction">
    <text evidence="4">By salicylic acid.</text>
</comment>
<comment type="similarity">
    <text evidence="5">Belongs to the WRKY group III family.</text>
</comment>
<comment type="sequence caution" evidence="5">
    <conflict type="erroneous initiation">
        <sequence resource="EMBL-CDS" id="AAK28310"/>
    </conflict>
</comment>
<comment type="sequence caution" evidence="5">
    <conflict type="erroneous initiation">
        <sequence resource="EMBL-CDS" id="CAB82760"/>
    </conflict>
</comment>
<organism>
    <name type="scientific">Arabidopsis thaliana</name>
    <name type="common">Mouse-ear cress</name>
    <dbReference type="NCBI Taxonomy" id="3702"/>
    <lineage>
        <taxon>Eukaryota</taxon>
        <taxon>Viridiplantae</taxon>
        <taxon>Streptophyta</taxon>
        <taxon>Embryophyta</taxon>
        <taxon>Tracheophyta</taxon>
        <taxon>Spermatophyta</taxon>
        <taxon>Magnoliopsida</taxon>
        <taxon>eudicotyledons</taxon>
        <taxon>Gunneridae</taxon>
        <taxon>Pentapetalae</taxon>
        <taxon>rosids</taxon>
        <taxon>malvids</taxon>
        <taxon>Brassicales</taxon>
        <taxon>Brassicaceae</taxon>
        <taxon>Camelineae</taxon>
        <taxon>Arabidopsis</taxon>
    </lineage>
</organism>
<sequence>MNSCQQKAMEKLLHGHGCANQLLIMDQTESDSSMEREDLAKSVLHCFSDALSILIDTNDHQDDQSNNSSPQDSSPVLESSRKPLHKRGRKTSMAESSDYHRHESSTPIYHDGFLWRKYGQKQIKESEYQRSYYKCAYTKDQNCEAKKQVQKIQHNPPLYSTTYFGQHICQLHQAYATFPIDTSDFEEHEGSHMIRFGHPNISFSSSTSNLRQHQNHQDRIKDEYMKPVIAEDWSPSQWMSSEVALAVEAFEFNPFWTSHDLSS</sequence>
<proteinExistence type="evidence at protein level"/>
<name>WRK62_ARATH</name>
<accession>Q9LZV6</accession>
<accession>Q9C5T2</accession>
<reference key="1">
    <citation type="journal article" date="2001" name="Plant Cell">
        <title>Evidence for an important role of WRKY DNA binding proteins in the regulation of NPR1 gene expression.</title>
        <authorList>
            <person name="Yu D."/>
            <person name="Chen C."/>
            <person name="Chen Z."/>
        </authorList>
    </citation>
    <scope>NUCLEOTIDE SEQUENCE [MRNA]</scope>
    <scope>INDUCTION</scope>
</reference>
<reference key="2">
    <citation type="journal article" date="2000" name="Nature">
        <title>Sequence and analysis of chromosome 5 of the plant Arabidopsis thaliana.</title>
        <authorList>
            <person name="Tabata S."/>
            <person name="Kaneko T."/>
            <person name="Nakamura Y."/>
            <person name="Kotani H."/>
            <person name="Kato T."/>
            <person name="Asamizu E."/>
            <person name="Miyajima N."/>
            <person name="Sasamoto S."/>
            <person name="Kimura T."/>
            <person name="Hosouchi T."/>
            <person name="Kawashima K."/>
            <person name="Kohara M."/>
            <person name="Matsumoto M."/>
            <person name="Matsuno A."/>
            <person name="Muraki A."/>
            <person name="Nakayama S."/>
            <person name="Nakazaki N."/>
            <person name="Naruo K."/>
            <person name="Okumura S."/>
            <person name="Shinpo S."/>
            <person name="Takeuchi C."/>
            <person name="Wada T."/>
            <person name="Watanabe A."/>
            <person name="Yamada M."/>
            <person name="Yasuda M."/>
            <person name="Sato S."/>
            <person name="de la Bastide M."/>
            <person name="Huang E."/>
            <person name="Spiegel L."/>
            <person name="Gnoj L."/>
            <person name="O'Shaughnessy A."/>
            <person name="Preston R."/>
            <person name="Habermann K."/>
            <person name="Murray J."/>
            <person name="Johnson D."/>
            <person name="Rohlfing T."/>
            <person name="Nelson J."/>
            <person name="Stoneking T."/>
            <person name="Pepin K."/>
            <person name="Spieth J."/>
            <person name="Sekhon M."/>
            <person name="Armstrong J."/>
            <person name="Becker M."/>
            <person name="Belter E."/>
            <person name="Cordum H."/>
            <person name="Cordes M."/>
            <person name="Courtney L."/>
            <person name="Courtney W."/>
            <person name="Dante M."/>
            <person name="Du H."/>
            <person name="Edwards J."/>
            <person name="Fryman J."/>
            <person name="Haakensen B."/>
            <person name="Lamar E."/>
            <person name="Latreille P."/>
            <person name="Leonard S."/>
            <person name="Meyer R."/>
            <person name="Mulvaney E."/>
            <person name="Ozersky P."/>
            <person name="Riley A."/>
            <person name="Strowmatt C."/>
            <person name="Wagner-McPherson C."/>
            <person name="Wollam A."/>
            <person name="Yoakum M."/>
            <person name="Bell M."/>
            <person name="Dedhia N."/>
            <person name="Parnell L."/>
            <person name="Shah R."/>
            <person name="Rodriguez M."/>
            <person name="Hoon See L."/>
            <person name="Vil D."/>
            <person name="Baker J."/>
            <person name="Kirchoff K."/>
            <person name="Toth K."/>
            <person name="King L."/>
            <person name="Bahret A."/>
            <person name="Miller B."/>
            <person name="Marra M.A."/>
            <person name="Martienssen R."/>
            <person name="McCombie W.R."/>
            <person name="Wilson R.K."/>
            <person name="Murphy G."/>
            <person name="Bancroft I."/>
            <person name="Volckaert G."/>
            <person name="Wambutt R."/>
            <person name="Duesterhoeft A."/>
            <person name="Stiekema W."/>
            <person name="Pohl T."/>
            <person name="Entian K.-D."/>
            <person name="Terryn N."/>
            <person name="Hartley N."/>
            <person name="Bent E."/>
            <person name="Johnson S."/>
            <person name="Langham S.-A."/>
            <person name="McCullagh B."/>
            <person name="Robben J."/>
            <person name="Grymonprez B."/>
            <person name="Zimmermann W."/>
            <person name="Ramsperger U."/>
            <person name="Wedler H."/>
            <person name="Balke K."/>
            <person name="Wedler E."/>
            <person name="Peters S."/>
            <person name="van Staveren M."/>
            <person name="Dirkse W."/>
            <person name="Mooijman P."/>
            <person name="Klein Lankhorst R."/>
            <person name="Weitzenegger T."/>
            <person name="Bothe G."/>
            <person name="Rose M."/>
            <person name="Hauf J."/>
            <person name="Berneiser S."/>
            <person name="Hempel S."/>
            <person name="Feldpausch M."/>
            <person name="Lamberth S."/>
            <person name="Villarroel R."/>
            <person name="Gielen J."/>
            <person name="Ardiles W."/>
            <person name="Bents O."/>
            <person name="Lemcke K."/>
            <person name="Kolesov G."/>
            <person name="Mayer K.F.X."/>
            <person name="Rudd S."/>
            <person name="Schoof H."/>
            <person name="Schueller C."/>
            <person name="Zaccaria P."/>
            <person name="Mewes H.-W."/>
            <person name="Bevan M."/>
            <person name="Fransz P.F."/>
        </authorList>
    </citation>
    <scope>NUCLEOTIDE SEQUENCE [LARGE SCALE GENOMIC DNA]</scope>
    <source>
        <strain>cv. Columbia</strain>
    </source>
</reference>
<reference key="3">
    <citation type="journal article" date="2017" name="Plant J.">
        <title>Araport11: a complete reannotation of the Arabidopsis thaliana reference genome.</title>
        <authorList>
            <person name="Cheng C.Y."/>
            <person name="Krishnakumar V."/>
            <person name="Chan A.P."/>
            <person name="Thibaud-Nissen F."/>
            <person name="Schobel S."/>
            <person name="Town C.D."/>
        </authorList>
    </citation>
    <scope>GENOME REANNOTATION</scope>
    <source>
        <strain>cv. Columbia</strain>
    </source>
</reference>
<dbReference type="EMBL" id="AF224700">
    <property type="protein sequence ID" value="AAK28310.1"/>
    <property type="status" value="ALT_INIT"/>
    <property type="molecule type" value="mRNA"/>
</dbReference>
<dbReference type="EMBL" id="AL162351">
    <property type="protein sequence ID" value="CAB82760.1"/>
    <property type="status" value="ALT_INIT"/>
    <property type="molecule type" value="Genomic_DNA"/>
</dbReference>
<dbReference type="EMBL" id="CP002688">
    <property type="protein sequence ID" value="AED90407.1"/>
    <property type="molecule type" value="Genomic_DNA"/>
</dbReference>
<dbReference type="PIR" id="T48211">
    <property type="entry name" value="T48211"/>
</dbReference>
<dbReference type="RefSeq" id="NP_195810.2">
    <property type="nucleotide sequence ID" value="NM_120268.4"/>
</dbReference>
<dbReference type="SMR" id="Q9LZV6"/>
<dbReference type="BioGRID" id="17102">
    <property type="interactions" value="4"/>
</dbReference>
<dbReference type="FunCoup" id="Q9LZV6">
    <property type="interactions" value="1"/>
</dbReference>
<dbReference type="IntAct" id="Q9LZV6">
    <property type="interactions" value="1"/>
</dbReference>
<dbReference type="STRING" id="3702.Q9LZV6"/>
<dbReference type="PaxDb" id="3702-AT5G01900.1"/>
<dbReference type="ProteomicsDB" id="234176"/>
<dbReference type="EnsemblPlants" id="AT5G01900.1">
    <property type="protein sequence ID" value="AT5G01900.1"/>
    <property type="gene ID" value="AT5G01900"/>
</dbReference>
<dbReference type="GeneID" id="831826"/>
<dbReference type="Gramene" id="AT5G01900.1">
    <property type="protein sequence ID" value="AT5G01900.1"/>
    <property type="gene ID" value="AT5G01900"/>
</dbReference>
<dbReference type="KEGG" id="ath:AT5G01900"/>
<dbReference type="Araport" id="AT5G01900"/>
<dbReference type="TAIR" id="AT5G01900">
    <property type="gene designation" value="WRKY62"/>
</dbReference>
<dbReference type="HOGENOM" id="CLU_066547_1_0_1"/>
<dbReference type="InParanoid" id="Q9LZV6"/>
<dbReference type="OMA" id="DYHRHES"/>
<dbReference type="OrthoDB" id="2021064at2759"/>
<dbReference type="PhylomeDB" id="Q9LZV6"/>
<dbReference type="PRO" id="PR:Q9LZV6"/>
<dbReference type="Proteomes" id="UP000006548">
    <property type="component" value="Chromosome 5"/>
</dbReference>
<dbReference type="ExpressionAtlas" id="Q9LZV6">
    <property type="expression patterns" value="baseline and differential"/>
</dbReference>
<dbReference type="GO" id="GO:0005634">
    <property type="term" value="C:nucleus"/>
    <property type="evidence" value="ECO:0007669"/>
    <property type="project" value="UniProtKB-SubCell"/>
</dbReference>
<dbReference type="GO" id="GO:0003700">
    <property type="term" value="F:DNA-binding transcription factor activity"/>
    <property type="evidence" value="ECO:0000250"/>
    <property type="project" value="TAIR"/>
</dbReference>
<dbReference type="GO" id="GO:0043565">
    <property type="term" value="F:sequence-specific DNA binding"/>
    <property type="evidence" value="ECO:0007669"/>
    <property type="project" value="InterPro"/>
</dbReference>
<dbReference type="GO" id="GO:0042742">
    <property type="term" value="P:defense response to bacterium"/>
    <property type="evidence" value="ECO:0000315"/>
    <property type="project" value="TAIR"/>
</dbReference>
<dbReference type="GO" id="GO:0009863">
    <property type="term" value="P:salicylic acid mediated signaling pathway"/>
    <property type="evidence" value="ECO:0000315"/>
    <property type="project" value="TAIR"/>
</dbReference>
<dbReference type="Gene3D" id="2.20.25.80">
    <property type="entry name" value="WRKY domain"/>
    <property type="match status" value="1"/>
</dbReference>
<dbReference type="InterPro" id="IPR003657">
    <property type="entry name" value="WRKY_dom"/>
</dbReference>
<dbReference type="InterPro" id="IPR036576">
    <property type="entry name" value="WRKY_dom_sf"/>
</dbReference>
<dbReference type="InterPro" id="IPR044810">
    <property type="entry name" value="WRKY_plant"/>
</dbReference>
<dbReference type="PANTHER" id="PTHR31282">
    <property type="entry name" value="WRKY TRANSCRIPTION FACTOR 21-RELATED"/>
    <property type="match status" value="1"/>
</dbReference>
<dbReference type="Pfam" id="PF03106">
    <property type="entry name" value="WRKY"/>
    <property type="match status" value="1"/>
</dbReference>
<dbReference type="SMART" id="SM00774">
    <property type="entry name" value="WRKY"/>
    <property type="match status" value="1"/>
</dbReference>
<dbReference type="SUPFAM" id="SSF118290">
    <property type="entry name" value="WRKY DNA-binding domain"/>
    <property type="match status" value="1"/>
</dbReference>
<dbReference type="PROSITE" id="PS50811">
    <property type="entry name" value="WRKY"/>
    <property type="match status" value="1"/>
</dbReference>
<protein>
    <recommendedName>
        <fullName>Probable WRKY transcription factor 62</fullName>
    </recommendedName>
    <alternativeName>
        <fullName>WRKY DNA-binding protein 62</fullName>
    </alternativeName>
</protein>
<evidence type="ECO:0000250" key="1"/>
<evidence type="ECO:0000255" key="2">
    <source>
        <dbReference type="PROSITE-ProRule" id="PRU00223"/>
    </source>
</evidence>
<evidence type="ECO:0000256" key="3">
    <source>
        <dbReference type="SAM" id="MobiDB-lite"/>
    </source>
</evidence>
<evidence type="ECO:0000269" key="4">
    <source>
    </source>
</evidence>
<evidence type="ECO:0000305" key="5"/>
<gene>
    <name type="primary">WRKY62</name>
    <name type="ordered locus">At5g01900</name>
    <name type="ORF">T20L15.170</name>
</gene>
<feature type="chain" id="PRO_0000133703" description="Probable WRKY transcription factor 62">
    <location>
        <begin position="1"/>
        <end position="263"/>
    </location>
</feature>
<feature type="DNA-binding region" description="WRKY" evidence="2">
    <location>
        <begin position="104"/>
        <end position="174"/>
    </location>
</feature>
<feature type="region of interest" description="Disordered" evidence="3">
    <location>
        <begin position="59"/>
        <end position="104"/>
    </location>
</feature>
<feature type="compositionally biased region" description="Low complexity" evidence="3">
    <location>
        <begin position="64"/>
        <end position="74"/>
    </location>
</feature>
<feature type="sequence conflict" description="In Ref. 1; AAK28310." evidence="5" ref="1">
    <original>F</original>
    <variation>L</variation>
    <location>
        <position position="164"/>
    </location>
</feature>
<feature type="sequence conflict" description="In Ref. 1; AAK28310." evidence="5" ref="1">
    <original>T</original>
    <variation>A</variation>
    <location>
        <position position="257"/>
    </location>
</feature>